<reference key="1">
    <citation type="journal article" date="2008" name="J. Bacteriol.">
        <title>Complete genome sequence of uropathogenic Proteus mirabilis, a master of both adherence and motility.</title>
        <authorList>
            <person name="Pearson M.M."/>
            <person name="Sebaihia M."/>
            <person name="Churcher C."/>
            <person name="Quail M.A."/>
            <person name="Seshasayee A.S."/>
            <person name="Luscombe N.M."/>
            <person name="Abdellah Z."/>
            <person name="Arrosmith C."/>
            <person name="Atkin B."/>
            <person name="Chillingworth T."/>
            <person name="Hauser H."/>
            <person name="Jagels K."/>
            <person name="Moule S."/>
            <person name="Mungall K."/>
            <person name="Norbertczak H."/>
            <person name="Rabbinowitsch E."/>
            <person name="Walker D."/>
            <person name="Whithead S."/>
            <person name="Thomson N.R."/>
            <person name="Rather P.N."/>
            <person name="Parkhill J."/>
            <person name="Mobley H.L.T."/>
        </authorList>
    </citation>
    <scope>NUCLEOTIDE SEQUENCE [LARGE SCALE GENOMIC DNA]</scope>
    <source>
        <strain>HI4320</strain>
    </source>
</reference>
<protein>
    <recommendedName>
        <fullName evidence="1">Large ribosomal subunit protein bL31</fullName>
    </recommendedName>
    <alternativeName>
        <fullName evidence="2">50S ribosomal protein L31</fullName>
    </alternativeName>
</protein>
<sequence>MKKDIHPKYEEITATCSCGNVMKINSTAGHNLNLDVCDKCHPFYTGKQRDVATGGRVDLFNKRFKIPGSK</sequence>
<comment type="function">
    <text evidence="1">Binds the 23S rRNA.</text>
</comment>
<comment type="cofactor">
    <cofactor evidence="1">
        <name>Zn(2+)</name>
        <dbReference type="ChEBI" id="CHEBI:29105"/>
    </cofactor>
    <text evidence="1">Binds 1 zinc ion per subunit.</text>
</comment>
<comment type="subunit">
    <text evidence="1">Part of the 50S ribosomal subunit.</text>
</comment>
<comment type="similarity">
    <text evidence="1">Belongs to the bacterial ribosomal protein bL31 family. Type A subfamily.</text>
</comment>
<proteinExistence type="inferred from homology"/>
<name>RL31_PROMH</name>
<organism>
    <name type="scientific">Proteus mirabilis (strain HI4320)</name>
    <dbReference type="NCBI Taxonomy" id="529507"/>
    <lineage>
        <taxon>Bacteria</taxon>
        <taxon>Pseudomonadati</taxon>
        <taxon>Pseudomonadota</taxon>
        <taxon>Gammaproteobacteria</taxon>
        <taxon>Enterobacterales</taxon>
        <taxon>Morganellaceae</taxon>
        <taxon>Proteus</taxon>
    </lineage>
</organism>
<evidence type="ECO:0000255" key="1">
    <source>
        <dbReference type="HAMAP-Rule" id="MF_00501"/>
    </source>
</evidence>
<evidence type="ECO:0000305" key="2"/>
<gene>
    <name evidence="1" type="primary">rpmE</name>
    <name type="ordered locus">PMI3220</name>
</gene>
<accession>B4F176</accession>
<keyword id="KW-0479">Metal-binding</keyword>
<keyword id="KW-1185">Reference proteome</keyword>
<keyword id="KW-0687">Ribonucleoprotein</keyword>
<keyword id="KW-0689">Ribosomal protein</keyword>
<keyword id="KW-0694">RNA-binding</keyword>
<keyword id="KW-0699">rRNA-binding</keyword>
<keyword id="KW-0862">Zinc</keyword>
<dbReference type="EMBL" id="AM942759">
    <property type="protein sequence ID" value="CAR46310.1"/>
    <property type="molecule type" value="Genomic_DNA"/>
</dbReference>
<dbReference type="RefSeq" id="WP_004246411.1">
    <property type="nucleotide sequence ID" value="NC_010554.1"/>
</dbReference>
<dbReference type="SMR" id="B4F176"/>
<dbReference type="EnsemblBacteria" id="CAR46310">
    <property type="protein sequence ID" value="CAR46310"/>
    <property type="gene ID" value="PMI3220"/>
</dbReference>
<dbReference type="GeneID" id="6803167"/>
<dbReference type="KEGG" id="pmr:PMI3220"/>
<dbReference type="eggNOG" id="COG0254">
    <property type="taxonomic scope" value="Bacteria"/>
</dbReference>
<dbReference type="HOGENOM" id="CLU_114306_4_3_6"/>
<dbReference type="Proteomes" id="UP000008319">
    <property type="component" value="Chromosome"/>
</dbReference>
<dbReference type="GO" id="GO:1990904">
    <property type="term" value="C:ribonucleoprotein complex"/>
    <property type="evidence" value="ECO:0007669"/>
    <property type="project" value="UniProtKB-KW"/>
</dbReference>
<dbReference type="GO" id="GO:0005840">
    <property type="term" value="C:ribosome"/>
    <property type="evidence" value="ECO:0007669"/>
    <property type="project" value="UniProtKB-KW"/>
</dbReference>
<dbReference type="GO" id="GO:0046872">
    <property type="term" value="F:metal ion binding"/>
    <property type="evidence" value="ECO:0007669"/>
    <property type="project" value="UniProtKB-KW"/>
</dbReference>
<dbReference type="GO" id="GO:0019843">
    <property type="term" value="F:rRNA binding"/>
    <property type="evidence" value="ECO:0007669"/>
    <property type="project" value="UniProtKB-KW"/>
</dbReference>
<dbReference type="GO" id="GO:0003735">
    <property type="term" value="F:structural constituent of ribosome"/>
    <property type="evidence" value="ECO:0007669"/>
    <property type="project" value="InterPro"/>
</dbReference>
<dbReference type="GO" id="GO:0006412">
    <property type="term" value="P:translation"/>
    <property type="evidence" value="ECO:0007669"/>
    <property type="project" value="UniProtKB-UniRule"/>
</dbReference>
<dbReference type="FunFam" id="4.10.830.30:FF:000001">
    <property type="entry name" value="50S ribosomal protein L31"/>
    <property type="match status" value="1"/>
</dbReference>
<dbReference type="Gene3D" id="4.10.830.30">
    <property type="entry name" value="Ribosomal protein L31"/>
    <property type="match status" value="1"/>
</dbReference>
<dbReference type="HAMAP" id="MF_00501">
    <property type="entry name" value="Ribosomal_bL31_1"/>
    <property type="match status" value="1"/>
</dbReference>
<dbReference type="InterPro" id="IPR034704">
    <property type="entry name" value="Ribosomal_bL28/bL31-like_sf"/>
</dbReference>
<dbReference type="InterPro" id="IPR002150">
    <property type="entry name" value="Ribosomal_bL31"/>
</dbReference>
<dbReference type="InterPro" id="IPR027491">
    <property type="entry name" value="Ribosomal_bL31_A"/>
</dbReference>
<dbReference type="InterPro" id="IPR042105">
    <property type="entry name" value="Ribosomal_bL31_sf"/>
</dbReference>
<dbReference type="NCBIfam" id="TIGR00105">
    <property type="entry name" value="L31"/>
    <property type="match status" value="1"/>
</dbReference>
<dbReference type="NCBIfam" id="NF000612">
    <property type="entry name" value="PRK00019.1"/>
    <property type="match status" value="1"/>
</dbReference>
<dbReference type="PANTHER" id="PTHR33280">
    <property type="entry name" value="50S RIBOSOMAL PROTEIN L31, CHLOROPLASTIC"/>
    <property type="match status" value="1"/>
</dbReference>
<dbReference type="PANTHER" id="PTHR33280:SF6">
    <property type="entry name" value="LARGE RIBOSOMAL SUBUNIT PROTEIN BL31A"/>
    <property type="match status" value="1"/>
</dbReference>
<dbReference type="Pfam" id="PF01197">
    <property type="entry name" value="Ribosomal_L31"/>
    <property type="match status" value="1"/>
</dbReference>
<dbReference type="PRINTS" id="PR01249">
    <property type="entry name" value="RIBOSOMALL31"/>
</dbReference>
<dbReference type="SUPFAM" id="SSF143800">
    <property type="entry name" value="L28p-like"/>
    <property type="match status" value="1"/>
</dbReference>
<dbReference type="PROSITE" id="PS01143">
    <property type="entry name" value="RIBOSOMAL_L31"/>
    <property type="match status" value="1"/>
</dbReference>
<feature type="chain" id="PRO_1000126693" description="Large ribosomal subunit protein bL31">
    <location>
        <begin position="1"/>
        <end position="70"/>
    </location>
</feature>
<feature type="binding site" evidence="1">
    <location>
        <position position="16"/>
    </location>
    <ligand>
        <name>Zn(2+)</name>
        <dbReference type="ChEBI" id="CHEBI:29105"/>
    </ligand>
</feature>
<feature type="binding site" evidence="1">
    <location>
        <position position="18"/>
    </location>
    <ligand>
        <name>Zn(2+)</name>
        <dbReference type="ChEBI" id="CHEBI:29105"/>
    </ligand>
</feature>
<feature type="binding site" evidence="1">
    <location>
        <position position="37"/>
    </location>
    <ligand>
        <name>Zn(2+)</name>
        <dbReference type="ChEBI" id="CHEBI:29105"/>
    </ligand>
</feature>
<feature type="binding site" evidence="1">
    <location>
        <position position="40"/>
    </location>
    <ligand>
        <name>Zn(2+)</name>
        <dbReference type="ChEBI" id="CHEBI:29105"/>
    </ligand>
</feature>